<feature type="chain" id="PRO_0000330812" description="Transcription factor PCF7">
    <location>
        <begin position="1"/>
        <end position="457"/>
    </location>
</feature>
<feature type="domain" description="TCP" evidence="2">
    <location>
        <begin position="140"/>
        <end position="198"/>
    </location>
</feature>
<feature type="region of interest" description="Disordered" evidence="3">
    <location>
        <begin position="95"/>
        <end position="121"/>
    </location>
</feature>
<feature type="region of interest" description="Disordered" evidence="3">
    <location>
        <begin position="199"/>
        <end position="231"/>
    </location>
</feature>
<feature type="region of interest" description="Disordered" evidence="3">
    <location>
        <begin position="263"/>
        <end position="299"/>
    </location>
</feature>
<feature type="coiled-coil region" evidence="1">
    <location>
        <begin position="58"/>
        <end position="84"/>
    </location>
</feature>
<feature type="compositionally biased region" description="Gly residues" evidence="3">
    <location>
        <begin position="101"/>
        <end position="115"/>
    </location>
</feature>
<feature type="compositionally biased region" description="Polar residues" evidence="3">
    <location>
        <begin position="212"/>
        <end position="230"/>
    </location>
</feature>
<feature type="compositionally biased region" description="Low complexity" evidence="3">
    <location>
        <begin position="268"/>
        <end position="278"/>
    </location>
</feature>
<name>PCF7_ORYSI</name>
<reference key="1">
    <citation type="journal article" date="2005" name="PLoS Biol.">
        <title>The genomes of Oryza sativa: a history of duplications.</title>
        <authorList>
            <person name="Yu J."/>
            <person name="Wang J."/>
            <person name="Lin W."/>
            <person name="Li S."/>
            <person name="Li H."/>
            <person name="Zhou J."/>
            <person name="Ni P."/>
            <person name="Dong W."/>
            <person name="Hu S."/>
            <person name="Zeng C."/>
            <person name="Zhang J."/>
            <person name="Zhang Y."/>
            <person name="Li R."/>
            <person name="Xu Z."/>
            <person name="Li S."/>
            <person name="Li X."/>
            <person name="Zheng H."/>
            <person name="Cong L."/>
            <person name="Lin L."/>
            <person name="Yin J."/>
            <person name="Geng J."/>
            <person name="Li G."/>
            <person name="Shi J."/>
            <person name="Liu J."/>
            <person name="Lv H."/>
            <person name="Li J."/>
            <person name="Wang J."/>
            <person name="Deng Y."/>
            <person name="Ran L."/>
            <person name="Shi X."/>
            <person name="Wang X."/>
            <person name="Wu Q."/>
            <person name="Li C."/>
            <person name="Ren X."/>
            <person name="Wang J."/>
            <person name="Wang X."/>
            <person name="Li D."/>
            <person name="Liu D."/>
            <person name="Zhang X."/>
            <person name="Ji Z."/>
            <person name="Zhao W."/>
            <person name="Sun Y."/>
            <person name="Zhang Z."/>
            <person name="Bao J."/>
            <person name="Han Y."/>
            <person name="Dong L."/>
            <person name="Ji J."/>
            <person name="Chen P."/>
            <person name="Wu S."/>
            <person name="Liu J."/>
            <person name="Xiao Y."/>
            <person name="Bu D."/>
            <person name="Tan J."/>
            <person name="Yang L."/>
            <person name="Ye C."/>
            <person name="Zhang J."/>
            <person name="Xu J."/>
            <person name="Zhou Y."/>
            <person name="Yu Y."/>
            <person name="Zhang B."/>
            <person name="Zhuang S."/>
            <person name="Wei H."/>
            <person name="Liu B."/>
            <person name="Lei M."/>
            <person name="Yu H."/>
            <person name="Li Y."/>
            <person name="Xu H."/>
            <person name="Wei S."/>
            <person name="He X."/>
            <person name="Fang L."/>
            <person name="Zhang Z."/>
            <person name="Zhang Y."/>
            <person name="Huang X."/>
            <person name="Su Z."/>
            <person name="Tong W."/>
            <person name="Li J."/>
            <person name="Tong Z."/>
            <person name="Li S."/>
            <person name="Ye J."/>
            <person name="Wang L."/>
            <person name="Fang L."/>
            <person name="Lei T."/>
            <person name="Chen C.-S."/>
            <person name="Chen H.-C."/>
            <person name="Xu Z."/>
            <person name="Li H."/>
            <person name="Huang H."/>
            <person name="Zhang F."/>
            <person name="Xu H."/>
            <person name="Li N."/>
            <person name="Zhao C."/>
            <person name="Li S."/>
            <person name="Dong L."/>
            <person name="Huang Y."/>
            <person name="Li L."/>
            <person name="Xi Y."/>
            <person name="Qi Q."/>
            <person name="Li W."/>
            <person name="Zhang B."/>
            <person name="Hu W."/>
            <person name="Zhang Y."/>
            <person name="Tian X."/>
            <person name="Jiao Y."/>
            <person name="Liang X."/>
            <person name="Jin J."/>
            <person name="Gao L."/>
            <person name="Zheng W."/>
            <person name="Hao B."/>
            <person name="Liu S.-M."/>
            <person name="Wang W."/>
            <person name="Yuan L."/>
            <person name="Cao M."/>
            <person name="McDermott J."/>
            <person name="Samudrala R."/>
            <person name="Wang J."/>
            <person name="Wong G.K.-S."/>
            <person name="Yang H."/>
        </authorList>
    </citation>
    <scope>NUCLEOTIDE SEQUENCE [LARGE SCALE GENOMIC DNA]</scope>
    <source>
        <strain>cv. 93-11</strain>
    </source>
</reference>
<reference key="2">
    <citation type="journal article" date="2002" name="Plant J.">
        <title>DNA binding and dimerization specificity and potential targets for the TCP protein family.</title>
        <authorList>
            <person name="Kosugi S."/>
            <person name="Ohashi Y."/>
        </authorList>
    </citation>
    <scope>FUNCTION</scope>
</reference>
<evidence type="ECO:0000255" key="1"/>
<evidence type="ECO:0000255" key="2">
    <source>
        <dbReference type="PROSITE-ProRule" id="PRU00701"/>
    </source>
</evidence>
<evidence type="ECO:0000256" key="3">
    <source>
        <dbReference type="SAM" id="MobiDB-lite"/>
    </source>
</evidence>
<evidence type="ECO:0000269" key="4">
    <source>
    </source>
</evidence>
<evidence type="ECO:0000305" key="5"/>
<sequence>MSGFTNKDGRQNLAPCFNFRSSPFRLTVGERELKLEEDKNQLSKGLDPWTSNPTASASTLHYLLQEKERAQQAHEQLQIYQQQQGFGSFLQHRIRQPASRGPGGGGGGGDGGGSSGESTPVDALATAFGAGRIVRSAAGRKDRHSKVCTARGLRDRRVRLAAHTAIRFYDVQDRLGYDRPSKAVDWLMRNAKAAIDELPDRAEAPPPPAAASTEQPEGTEQANSTSYGFGNTTGGTMTSAASAAAGSFLPHSLGADRVSDSVKSLFPSSSTASGAASAGHDEYRGSPPDLLSRTTSNQQPQELCLTLQSNQHQIFSHVSSNHHGMISSAGVPGWPDHSQRMQAWHAPENSTGDGRGGGNGDGYMFAMPSRQGLDQSQLFSHGEPLQSSGRGWASARAWLDPLAVAAIHHQPSTMAAGQVGFGHLVGGAGGGGGFMGFLAPAAQRLEGEEEHGSEVIR</sequence>
<proteinExistence type="predicted"/>
<gene>
    <name type="primary">PCF7</name>
    <name type="ORF">OsI_003711</name>
</gene>
<dbReference type="EMBL" id="CM000126">
    <property type="status" value="NOT_ANNOTATED_CDS"/>
    <property type="molecule type" value="Genomic_DNA"/>
</dbReference>
<dbReference type="SMR" id="A2WV68"/>
<dbReference type="STRING" id="39946.A2WV68"/>
<dbReference type="Proteomes" id="UP000007015">
    <property type="component" value="Chromosome 1"/>
</dbReference>
<dbReference type="GO" id="GO:0005634">
    <property type="term" value="C:nucleus"/>
    <property type="evidence" value="ECO:0007669"/>
    <property type="project" value="UniProtKB-SubCell"/>
</dbReference>
<dbReference type="GO" id="GO:0003700">
    <property type="term" value="F:DNA-binding transcription factor activity"/>
    <property type="evidence" value="ECO:0007669"/>
    <property type="project" value="InterPro"/>
</dbReference>
<dbReference type="GO" id="GO:0043565">
    <property type="term" value="F:sequence-specific DNA binding"/>
    <property type="evidence" value="ECO:0007669"/>
    <property type="project" value="TreeGrafter"/>
</dbReference>
<dbReference type="InterPro" id="IPR017887">
    <property type="entry name" value="TF_TCP_subgr"/>
</dbReference>
<dbReference type="InterPro" id="IPR005333">
    <property type="entry name" value="Transcription_factor_TCP"/>
</dbReference>
<dbReference type="PANTHER" id="PTHR31072:SF257">
    <property type="entry name" value="TRANSCRIPTION FACTOR PCF7"/>
    <property type="match status" value="1"/>
</dbReference>
<dbReference type="PANTHER" id="PTHR31072">
    <property type="entry name" value="TRANSCRIPTION FACTOR TCP4-RELATED"/>
    <property type="match status" value="1"/>
</dbReference>
<dbReference type="Pfam" id="PF03634">
    <property type="entry name" value="TCP"/>
    <property type="match status" value="1"/>
</dbReference>
<dbReference type="PROSITE" id="PS51369">
    <property type="entry name" value="TCP"/>
    <property type="match status" value="1"/>
</dbReference>
<accession>A2WV68</accession>
<protein>
    <recommendedName>
        <fullName>Transcription factor PCF7</fullName>
    </recommendedName>
</protein>
<comment type="function">
    <text evidence="4">Transcription activator. Binds the promoter core sequence 5'-GGNCC-3'.</text>
</comment>
<comment type="subunit">
    <text evidence="5">Forms homodimers and heterodimers.</text>
</comment>
<comment type="subcellular location">
    <subcellularLocation>
        <location evidence="5">Nucleus</location>
    </subcellularLocation>
</comment>
<keyword id="KW-0010">Activator</keyword>
<keyword id="KW-0175">Coiled coil</keyword>
<keyword id="KW-0217">Developmental protein</keyword>
<keyword id="KW-0238">DNA-binding</keyword>
<keyword id="KW-0539">Nucleus</keyword>
<keyword id="KW-1185">Reference proteome</keyword>
<keyword id="KW-0804">Transcription</keyword>
<keyword id="KW-0805">Transcription regulation</keyword>
<organism>
    <name type="scientific">Oryza sativa subsp. indica</name>
    <name type="common">Rice</name>
    <dbReference type="NCBI Taxonomy" id="39946"/>
    <lineage>
        <taxon>Eukaryota</taxon>
        <taxon>Viridiplantae</taxon>
        <taxon>Streptophyta</taxon>
        <taxon>Embryophyta</taxon>
        <taxon>Tracheophyta</taxon>
        <taxon>Spermatophyta</taxon>
        <taxon>Magnoliopsida</taxon>
        <taxon>Liliopsida</taxon>
        <taxon>Poales</taxon>
        <taxon>Poaceae</taxon>
        <taxon>BOP clade</taxon>
        <taxon>Oryzoideae</taxon>
        <taxon>Oryzeae</taxon>
        <taxon>Oryzinae</taxon>
        <taxon>Oryza</taxon>
        <taxon>Oryza sativa</taxon>
    </lineage>
</organism>